<feature type="signal peptide" evidence="1">
    <location>
        <begin position="1"/>
        <end position="20"/>
    </location>
</feature>
<feature type="chain" id="PRO_0000017465" description="Pulmonary surfactant-associated protein D">
    <location>
        <begin position="21"/>
        <end position="375"/>
    </location>
</feature>
<feature type="domain" description="Collagen-like">
    <location>
        <begin position="46"/>
        <end position="222"/>
    </location>
</feature>
<feature type="domain" description="C-type lectin" evidence="4">
    <location>
        <begin position="260"/>
        <end position="375"/>
    </location>
</feature>
<feature type="region of interest" description="Disordered" evidence="5">
    <location>
        <begin position="45"/>
        <end position="221"/>
    </location>
</feature>
<feature type="coiled-coil region" evidence="3">
    <location>
        <begin position="223"/>
        <end position="252"/>
    </location>
</feature>
<feature type="compositionally biased region" description="Basic and acidic residues" evidence="5">
    <location>
        <begin position="50"/>
        <end position="65"/>
    </location>
</feature>
<feature type="compositionally biased region" description="Low complexity" evidence="5">
    <location>
        <begin position="66"/>
        <end position="86"/>
    </location>
</feature>
<feature type="compositionally biased region" description="Pro residues" evidence="5">
    <location>
        <begin position="105"/>
        <end position="114"/>
    </location>
</feature>
<feature type="compositionally biased region" description="Low complexity" evidence="5">
    <location>
        <begin position="116"/>
        <end position="132"/>
    </location>
</feature>
<feature type="compositionally biased region" description="Low complexity" evidence="5">
    <location>
        <begin position="138"/>
        <end position="150"/>
    </location>
</feature>
<feature type="compositionally biased region" description="Basic and acidic residues" evidence="5">
    <location>
        <begin position="204"/>
        <end position="216"/>
    </location>
</feature>
<feature type="modified residue" description="S-nitrosocysteine" evidence="2">
    <location>
        <position position="35"/>
    </location>
</feature>
<feature type="modified residue" description="S-nitrosocysteine" evidence="2">
    <location>
        <position position="40"/>
    </location>
</feature>
<feature type="modified residue" description="4-hydroxyproline" evidence="1">
    <location>
        <position position="78"/>
    </location>
</feature>
<feature type="modified residue" description="5-hydroxylysine" evidence="1">
    <location>
        <position position="87"/>
    </location>
</feature>
<feature type="modified residue" description="4-hydroxyproline" evidence="1">
    <location>
        <position position="96"/>
    </location>
</feature>
<feature type="modified residue" description="5-hydroxylysine" evidence="1">
    <location>
        <position position="99"/>
    </location>
</feature>
<feature type="modified residue" description="4-hydroxyproline" evidence="1">
    <location>
        <position position="171"/>
    </location>
</feature>
<feature type="modified residue" description="4-hydroxyproline" evidence="1">
    <location>
        <position position="177"/>
    </location>
</feature>
<feature type="glycosylation site" description="N-linked (GlcNAc...) asparagine" evidence="3">
    <location>
        <position position="90"/>
    </location>
</feature>
<feature type="disulfide bond">
    <location>
        <begin position="281"/>
        <end position="373"/>
    </location>
</feature>
<feature type="disulfide bond">
    <location>
        <begin position="351"/>
        <end position="365"/>
    </location>
</feature>
<feature type="sequence variant" id="VAR_020937" description="In dbSNP:rs721917." evidence="6 7 9 10">
    <original>M</original>
    <variation>T</variation>
    <location>
        <position position="31"/>
    </location>
</feature>
<feature type="sequence variant" id="VAR_020938" description="In dbSNP:rs17878336." evidence="7 10">
    <original>L</original>
    <variation>V</variation>
    <location>
        <position position="123"/>
    </location>
</feature>
<feature type="sequence variant" id="VAR_020939" description="In dbSNP:rs2243639." evidence="6 7 9 10">
    <original>T</original>
    <variation>A</variation>
    <location>
        <position position="180"/>
    </location>
</feature>
<feature type="sequence variant" id="VAR_020940" description="In dbSNP:rs3088308." evidence="7 10">
    <original>S</original>
    <variation>T</variation>
    <location>
        <position position="290"/>
    </location>
</feature>
<feature type="sequence variant" id="VAR_020941" description="In dbSNP:rs4469829." evidence="10">
    <original>E</original>
    <variation>K</variation>
    <location>
        <position position="309"/>
    </location>
</feature>
<feature type="sequence conflict" description="In Ref. 6; AAH22318." evidence="11" ref="6">
    <original>E</original>
    <variation>G</variation>
    <location>
        <position position="22"/>
    </location>
</feature>
<feature type="sequence conflict" description="In Ref. 7; AA sequence." evidence="11" ref="7">
    <original>P</original>
    <variation>F</variation>
    <location>
        <position position="59"/>
    </location>
</feature>
<feature type="sequence conflict" description="In Ref. 2; AAB59450." evidence="11" ref="2">
    <original>P</original>
    <variation>A</variation>
    <location>
        <position position="122"/>
    </location>
</feature>
<feature type="sequence conflict" description="In Ref. 7; AA sequence." evidence="11" ref="7">
    <original>H</original>
    <variation>P</variation>
    <location>
        <position position="240"/>
    </location>
</feature>
<feature type="sequence conflict" description="In Ref. 6; AAH22318." evidence="11" ref="6">
    <original>E</original>
    <variation>K</variation>
    <location>
        <position position="341"/>
    </location>
</feature>
<feature type="sequence conflict" description="In Ref. 3; CAG46746." evidence="11" ref="3">
    <original>R</original>
    <variation>S</variation>
    <location>
        <position position="369"/>
    </location>
</feature>
<feature type="helix" evidence="12">
    <location>
        <begin position="226"/>
        <end position="253"/>
    </location>
</feature>
<feature type="turn" evidence="12">
    <location>
        <begin position="254"/>
        <end position="256"/>
    </location>
</feature>
<feature type="strand" evidence="12">
    <location>
        <begin position="257"/>
        <end position="260"/>
    </location>
</feature>
<feature type="strand" evidence="12">
    <location>
        <begin position="263"/>
        <end position="273"/>
    </location>
</feature>
<feature type="helix" evidence="12">
    <location>
        <begin position="274"/>
        <end position="283"/>
    </location>
</feature>
<feature type="strand" evidence="12">
    <location>
        <begin position="286"/>
        <end position="288"/>
    </location>
</feature>
<feature type="helix" evidence="12">
    <location>
        <begin position="294"/>
        <end position="307"/>
    </location>
</feature>
<feature type="strand" evidence="14">
    <location>
        <begin position="311"/>
        <end position="316"/>
    </location>
</feature>
<feature type="strand" evidence="12">
    <location>
        <begin position="318"/>
        <end position="320"/>
    </location>
</feature>
<feature type="strand" evidence="13">
    <location>
        <begin position="323"/>
        <end position="325"/>
    </location>
</feature>
<feature type="helix" evidence="12">
    <location>
        <begin position="345"/>
        <end position="347"/>
    </location>
</feature>
<feature type="strand" evidence="12">
    <location>
        <begin position="351"/>
        <end position="354"/>
    </location>
</feature>
<feature type="strand" evidence="12">
    <location>
        <begin position="360"/>
        <end position="363"/>
    </location>
</feature>
<feature type="strand" evidence="12">
    <location>
        <begin position="367"/>
        <end position="375"/>
    </location>
</feature>
<dbReference type="EMBL" id="X65018">
    <property type="protein sequence ID" value="CAA46152.1"/>
    <property type="molecule type" value="mRNA"/>
</dbReference>
<dbReference type="EMBL" id="L05485">
    <property type="protein sequence ID" value="AAB59450.1"/>
    <property type="molecule type" value="Genomic_DNA"/>
</dbReference>
<dbReference type="EMBL" id="L05483">
    <property type="protein sequence ID" value="AAB59450.1"/>
    <property type="status" value="JOINED"/>
    <property type="molecule type" value="Genomic_DNA"/>
</dbReference>
<dbReference type="EMBL" id="L05484">
    <property type="protein sequence ID" value="AAB59450.1"/>
    <property type="status" value="JOINED"/>
    <property type="molecule type" value="Genomic_DNA"/>
</dbReference>
<dbReference type="EMBL" id="CR541948">
    <property type="protein sequence ID" value="CAG46746.1"/>
    <property type="molecule type" value="mRNA"/>
</dbReference>
<dbReference type="EMBL" id="AY216721">
    <property type="protein sequence ID" value="AAO22991.1"/>
    <property type="molecule type" value="Genomic_DNA"/>
</dbReference>
<dbReference type="EMBL" id="AL512662">
    <property type="status" value="NOT_ANNOTATED_CDS"/>
    <property type="molecule type" value="Genomic_DNA"/>
</dbReference>
<dbReference type="EMBL" id="BC022318">
    <property type="protein sequence ID" value="AAH22318.1"/>
    <property type="molecule type" value="mRNA"/>
</dbReference>
<dbReference type="CCDS" id="CCDS7362.1"/>
<dbReference type="PIR" id="A45225">
    <property type="entry name" value="A45225"/>
</dbReference>
<dbReference type="RefSeq" id="NP_003010.4">
    <property type="nucleotide sequence ID" value="NM_003019.4"/>
</dbReference>
<dbReference type="RefSeq" id="XP_011538389.1">
    <property type="nucleotide sequence ID" value="XM_011540087.2"/>
</dbReference>
<dbReference type="PDB" id="1B08">
    <property type="method" value="X-ray"/>
    <property type="resolution" value="2.30 A"/>
    <property type="chains" value="A/B/C=218-375"/>
</dbReference>
<dbReference type="PDB" id="1M7L">
    <property type="method" value="NMR"/>
    <property type="chains" value="A/B/C=220-257"/>
</dbReference>
<dbReference type="PDB" id="1PW9">
    <property type="method" value="X-ray"/>
    <property type="resolution" value="1.60 A"/>
    <property type="chains" value="A/B/C=199-375"/>
</dbReference>
<dbReference type="PDB" id="1PWB">
    <property type="method" value="X-ray"/>
    <property type="resolution" value="1.40 A"/>
    <property type="chains" value="A/B/C=199-375"/>
</dbReference>
<dbReference type="PDB" id="2GGU">
    <property type="method" value="X-ray"/>
    <property type="resolution" value="1.90 A"/>
    <property type="chains" value="A/B/C=223-375"/>
</dbReference>
<dbReference type="PDB" id="2GGX">
    <property type="method" value="X-ray"/>
    <property type="resolution" value="1.90 A"/>
    <property type="chains" value="A/B/C=223-375"/>
</dbReference>
<dbReference type="PDB" id="2ORJ">
    <property type="method" value="X-ray"/>
    <property type="resolution" value="1.80 A"/>
    <property type="chains" value="A/B/C=223-375"/>
</dbReference>
<dbReference type="PDB" id="2ORK">
    <property type="method" value="X-ray"/>
    <property type="resolution" value="1.89 A"/>
    <property type="chains" value="A/B/C=223-375"/>
</dbReference>
<dbReference type="PDB" id="2OS9">
    <property type="method" value="X-ray"/>
    <property type="resolution" value="1.70 A"/>
    <property type="chains" value="A/B/C=223-375"/>
</dbReference>
<dbReference type="PDB" id="2RIA">
    <property type="method" value="X-ray"/>
    <property type="resolution" value="1.80 A"/>
    <property type="chains" value="A/B/C=223-375"/>
</dbReference>
<dbReference type="PDB" id="2RIB">
    <property type="method" value="X-ray"/>
    <property type="resolution" value="1.80 A"/>
    <property type="chains" value="A/B/C=223-375"/>
</dbReference>
<dbReference type="PDB" id="2RIC">
    <property type="method" value="X-ray"/>
    <property type="resolution" value="1.80 A"/>
    <property type="chains" value="A/B/C=223-375"/>
</dbReference>
<dbReference type="PDB" id="2RID">
    <property type="method" value="X-ray"/>
    <property type="resolution" value="1.80 A"/>
    <property type="chains" value="A/B/C=223-375"/>
</dbReference>
<dbReference type="PDB" id="2RIE">
    <property type="method" value="X-ray"/>
    <property type="resolution" value="1.60 A"/>
    <property type="chains" value="A/B/C=223-375"/>
</dbReference>
<dbReference type="PDB" id="3DBZ">
    <property type="method" value="X-ray"/>
    <property type="resolution" value="1.80 A"/>
    <property type="chains" value="A/B/C=223-375"/>
</dbReference>
<dbReference type="PDB" id="3G81">
    <property type="method" value="X-ray"/>
    <property type="resolution" value="1.80 A"/>
    <property type="chains" value="A/B/C=223-375"/>
</dbReference>
<dbReference type="PDB" id="3G83">
    <property type="method" value="X-ray"/>
    <property type="resolution" value="1.90 A"/>
    <property type="chains" value="A/B/C=223-375"/>
</dbReference>
<dbReference type="PDB" id="3G84">
    <property type="method" value="X-ray"/>
    <property type="resolution" value="2.30 A"/>
    <property type="chains" value="A/B/C=223-375"/>
</dbReference>
<dbReference type="PDB" id="3IKN">
    <property type="method" value="X-ray"/>
    <property type="resolution" value="1.60 A"/>
    <property type="chains" value="A/B/C=199-375"/>
</dbReference>
<dbReference type="PDB" id="3IKP">
    <property type="method" value="X-ray"/>
    <property type="resolution" value="1.75 A"/>
    <property type="chains" value="A/B/C=199-375"/>
</dbReference>
<dbReference type="PDB" id="3IKQ">
    <property type="method" value="X-ray"/>
    <property type="resolution" value="2.25 A"/>
    <property type="chains" value="A/B/C=199-375"/>
</dbReference>
<dbReference type="PDB" id="3IKR">
    <property type="method" value="X-ray"/>
    <property type="resolution" value="1.65 A"/>
    <property type="chains" value="A/B/C=199-375"/>
</dbReference>
<dbReference type="PDB" id="4E52">
    <property type="method" value="X-ray"/>
    <property type="resolution" value="1.70 A"/>
    <property type="chains" value="A/B/C=201-375"/>
</dbReference>
<dbReference type="PDB" id="4M17">
    <property type="method" value="X-ray"/>
    <property type="resolution" value="2.10 A"/>
    <property type="chains" value="A/B/C/D/E/F/G/H/I/J/K/L=229-375"/>
</dbReference>
<dbReference type="PDB" id="4M18">
    <property type="method" value="X-ray"/>
    <property type="resolution" value="3.20 A"/>
    <property type="chains" value="A/B/C/D/E/F/G/H/I/J/K/L=229-375"/>
</dbReference>
<dbReference type="PDB" id="5OXR">
    <property type="method" value="X-ray"/>
    <property type="resolution" value="1.75 A"/>
    <property type="chains" value="A/B/C=201-375"/>
</dbReference>
<dbReference type="PDB" id="5OXS">
    <property type="method" value="X-ray"/>
    <property type="resolution" value="1.65 A"/>
    <property type="chains" value="A/B/C=201-375"/>
</dbReference>
<dbReference type="PDBsum" id="1B08"/>
<dbReference type="PDBsum" id="1M7L"/>
<dbReference type="PDBsum" id="1PW9"/>
<dbReference type="PDBsum" id="1PWB"/>
<dbReference type="PDBsum" id="2GGU"/>
<dbReference type="PDBsum" id="2GGX"/>
<dbReference type="PDBsum" id="2ORJ"/>
<dbReference type="PDBsum" id="2ORK"/>
<dbReference type="PDBsum" id="2OS9"/>
<dbReference type="PDBsum" id="2RIA"/>
<dbReference type="PDBsum" id="2RIB"/>
<dbReference type="PDBsum" id="2RIC"/>
<dbReference type="PDBsum" id="2RID"/>
<dbReference type="PDBsum" id="2RIE"/>
<dbReference type="PDBsum" id="3DBZ"/>
<dbReference type="PDBsum" id="3G81"/>
<dbReference type="PDBsum" id="3G83"/>
<dbReference type="PDBsum" id="3G84"/>
<dbReference type="PDBsum" id="3IKN"/>
<dbReference type="PDBsum" id="3IKP"/>
<dbReference type="PDBsum" id="3IKQ"/>
<dbReference type="PDBsum" id="3IKR"/>
<dbReference type="PDBsum" id="4E52"/>
<dbReference type="PDBsum" id="4M17"/>
<dbReference type="PDBsum" id="4M18"/>
<dbReference type="PDBsum" id="5OXR"/>
<dbReference type="PDBsum" id="5OXS"/>
<dbReference type="SMR" id="P35247"/>
<dbReference type="BioGRID" id="112339">
    <property type="interactions" value="9"/>
</dbReference>
<dbReference type="FunCoup" id="P35247">
    <property type="interactions" value="180"/>
</dbReference>
<dbReference type="IntAct" id="P35247">
    <property type="interactions" value="6"/>
</dbReference>
<dbReference type="STRING" id="9606.ENSP00000361366"/>
<dbReference type="ChEMBL" id="CHEMBL2176857"/>
<dbReference type="DrugBank" id="DB02379">
    <property type="generic name" value="Beta-D-Glucose"/>
</dbReference>
<dbReference type="UniLectin" id="P35247"/>
<dbReference type="GlyCosmos" id="P35247">
    <property type="glycosylation" value="1 site, No reported glycans"/>
</dbReference>
<dbReference type="GlyGen" id="P35247">
    <property type="glycosylation" value="1 site"/>
</dbReference>
<dbReference type="iPTMnet" id="P35247"/>
<dbReference type="PhosphoSitePlus" id="P35247"/>
<dbReference type="BioMuta" id="SFTPD"/>
<dbReference type="DMDM" id="317373510"/>
<dbReference type="MassIVE" id="P35247"/>
<dbReference type="PaxDb" id="9606-ENSP00000361366"/>
<dbReference type="PeptideAtlas" id="P35247"/>
<dbReference type="ProteomicsDB" id="55012"/>
<dbReference type="Antibodypedia" id="3886">
    <property type="antibodies" value="583 antibodies from 38 providers"/>
</dbReference>
<dbReference type="DNASU" id="6441"/>
<dbReference type="Ensembl" id="ENST00000372292.8">
    <property type="protein sequence ID" value="ENSP00000361366.3"/>
    <property type="gene ID" value="ENSG00000133661.17"/>
</dbReference>
<dbReference type="GeneID" id="6441"/>
<dbReference type="KEGG" id="hsa:6441"/>
<dbReference type="MANE-Select" id="ENST00000372292.8">
    <property type="protein sequence ID" value="ENSP00000361366.3"/>
    <property type="RefSeq nucleotide sequence ID" value="NM_003019.5"/>
    <property type="RefSeq protein sequence ID" value="NP_003010.4"/>
</dbReference>
<dbReference type="UCSC" id="uc001kbh.4">
    <property type="organism name" value="human"/>
</dbReference>
<dbReference type="AGR" id="HGNC:10803"/>
<dbReference type="CTD" id="6441"/>
<dbReference type="DisGeNET" id="6441"/>
<dbReference type="GeneCards" id="SFTPD"/>
<dbReference type="HGNC" id="HGNC:10803">
    <property type="gene designation" value="SFTPD"/>
</dbReference>
<dbReference type="HPA" id="ENSG00000133661">
    <property type="expression patterns" value="Tissue enriched (lung)"/>
</dbReference>
<dbReference type="MalaCards" id="SFTPD"/>
<dbReference type="MIM" id="178635">
    <property type="type" value="gene"/>
</dbReference>
<dbReference type="neXtProt" id="NX_P35247"/>
<dbReference type="OpenTargets" id="ENSG00000133661"/>
<dbReference type="PharmGKB" id="PA35715"/>
<dbReference type="VEuPathDB" id="HostDB:ENSG00000133661"/>
<dbReference type="eggNOG" id="KOG4297">
    <property type="taxonomic scope" value="Eukaryota"/>
</dbReference>
<dbReference type="GeneTree" id="ENSGT00940000155748"/>
<dbReference type="HOGENOM" id="CLU_049894_3_0_1"/>
<dbReference type="InParanoid" id="P35247"/>
<dbReference type="OMA" id="YQKVATF"/>
<dbReference type="OrthoDB" id="10255512at2759"/>
<dbReference type="PAN-GO" id="P35247">
    <property type="GO annotations" value="5 GO annotations based on evolutionary models"/>
</dbReference>
<dbReference type="PhylomeDB" id="P35247"/>
<dbReference type="TreeFam" id="TF330481"/>
<dbReference type="PathwayCommons" id="P35247"/>
<dbReference type="Reactome" id="R-HSA-166016">
    <property type="pathway name" value="Toll Like Receptor 4 (TLR4) Cascade"/>
</dbReference>
<dbReference type="Reactome" id="R-HSA-168179">
    <property type="pathway name" value="Toll Like Receptor TLR1:TLR2 Cascade"/>
</dbReference>
<dbReference type="Reactome" id="R-HSA-198933">
    <property type="pathway name" value="Immunoregulatory interactions between a Lymphoid and a non-Lymphoid cell"/>
</dbReference>
<dbReference type="Reactome" id="R-HSA-391160">
    <property type="pathway name" value="Signal regulatory protein family interactions"/>
</dbReference>
<dbReference type="Reactome" id="R-HSA-5683826">
    <property type="pathway name" value="Surfactant metabolism"/>
</dbReference>
<dbReference type="Reactome" id="R-HSA-5686938">
    <property type="pathway name" value="Regulation of TLR by endogenous ligand"/>
</dbReference>
<dbReference type="Reactome" id="R-HSA-5688849">
    <property type="pathway name" value="Defective CSF2RB causes SMDP5"/>
</dbReference>
<dbReference type="Reactome" id="R-HSA-5688890">
    <property type="pathway name" value="Defective CSF2RA causes SMDP4"/>
</dbReference>
<dbReference type="Reactome" id="R-HSA-9692916">
    <property type="pathway name" value="SARS-CoV-1 activates/modulates innate immune responses"/>
</dbReference>
<dbReference type="Reactome" id="R-HSA-9705671">
    <property type="pathway name" value="SARS-CoV-2 activates/modulates innate and adaptive immune responses"/>
</dbReference>
<dbReference type="SignaLink" id="P35247"/>
<dbReference type="SIGNOR" id="P35247"/>
<dbReference type="BioGRID-ORCS" id="6441">
    <property type="hits" value="9 hits in 1147 CRISPR screens"/>
</dbReference>
<dbReference type="EvolutionaryTrace" id="P35247"/>
<dbReference type="GeneWiki" id="Surfactant_protein_D"/>
<dbReference type="GenomeRNAi" id="6441"/>
<dbReference type="Pharos" id="P35247">
    <property type="development level" value="Tbio"/>
</dbReference>
<dbReference type="PRO" id="PR:P35247"/>
<dbReference type="Proteomes" id="UP000005640">
    <property type="component" value="Chromosome 10"/>
</dbReference>
<dbReference type="RNAct" id="P35247">
    <property type="molecule type" value="protein"/>
</dbReference>
<dbReference type="Bgee" id="ENSG00000133661">
    <property type="expression patterns" value="Expressed in lower lobe of lung and 114 other cell types or tissues"/>
</dbReference>
<dbReference type="ExpressionAtlas" id="P35247">
    <property type="expression patterns" value="baseline and differential"/>
</dbReference>
<dbReference type="GO" id="GO:0045334">
    <property type="term" value="C:clathrin-coated endocytic vesicle"/>
    <property type="evidence" value="ECO:0000304"/>
    <property type="project" value="Reactome"/>
</dbReference>
<dbReference type="GO" id="GO:0005581">
    <property type="term" value="C:collagen trimer"/>
    <property type="evidence" value="ECO:0007669"/>
    <property type="project" value="UniProtKB-KW"/>
</dbReference>
<dbReference type="GO" id="GO:0030139">
    <property type="term" value="C:endocytic vesicle"/>
    <property type="evidence" value="ECO:0000304"/>
    <property type="project" value="UniProtKB"/>
</dbReference>
<dbReference type="GO" id="GO:0005789">
    <property type="term" value="C:endoplasmic reticulum membrane"/>
    <property type="evidence" value="ECO:0000304"/>
    <property type="project" value="Reactome"/>
</dbReference>
<dbReference type="GO" id="GO:0005576">
    <property type="term" value="C:extracellular region"/>
    <property type="evidence" value="ECO:0000304"/>
    <property type="project" value="UniProtKB"/>
</dbReference>
<dbReference type="GO" id="GO:0005615">
    <property type="term" value="C:extracellular space"/>
    <property type="evidence" value="ECO:0000318"/>
    <property type="project" value="GO_Central"/>
</dbReference>
<dbReference type="GO" id="GO:0005764">
    <property type="term" value="C:lysosome"/>
    <property type="evidence" value="ECO:0000304"/>
    <property type="project" value="UniProtKB"/>
</dbReference>
<dbReference type="GO" id="GO:0005771">
    <property type="term" value="C:multivesicular body"/>
    <property type="evidence" value="ECO:0000318"/>
    <property type="project" value="GO_Central"/>
</dbReference>
<dbReference type="GO" id="GO:0030246">
    <property type="term" value="F:carbohydrate binding"/>
    <property type="evidence" value="ECO:0000304"/>
    <property type="project" value="UniProtKB"/>
</dbReference>
<dbReference type="GO" id="GO:0042802">
    <property type="term" value="F:identical protein binding"/>
    <property type="evidence" value="ECO:0007669"/>
    <property type="project" value="Ensembl"/>
</dbReference>
<dbReference type="GO" id="GO:0042742">
    <property type="term" value="P:defense response to bacterium"/>
    <property type="evidence" value="ECO:0000304"/>
    <property type="project" value="UniProtKB"/>
</dbReference>
<dbReference type="GO" id="GO:0045087">
    <property type="term" value="P:innate immune response"/>
    <property type="evidence" value="ECO:0000304"/>
    <property type="project" value="UniProtKB"/>
</dbReference>
<dbReference type="GO" id="GO:0048286">
    <property type="term" value="P:lung alveolus development"/>
    <property type="evidence" value="ECO:0000315"/>
    <property type="project" value="UniProtKB"/>
</dbReference>
<dbReference type="GO" id="GO:0048246">
    <property type="term" value="P:macrophage chemotaxis"/>
    <property type="evidence" value="ECO:0000304"/>
    <property type="project" value="UniProtKB"/>
</dbReference>
<dbReference type="GO" id="GO:0032703">
    <property type="term" value="P:negative regulation of interleukin-2 production"/>
    <property type="evidence" value="ECO:0000304"/>
    <property type="project" value="UniProtKB"/>
</dbReference>
<dbReference type="GO" id="GO:0042130">
    <property type="term" value="P:negative regulation of T cell proliferation"/>
    <property type="evidence" value="ECO:0000304"/>
    <property type="project" value="UniProtKB"/>
</dbReference>
<dbReference type="GO" id="GO:0050766">
    <property type="term" value="P:positive regulation of phagocytosis"/>
    <property type="evidence" value="ECO:0000318"/>
    <property type="project" value="GO_Central"/>
</dbReference>
<dbReference type="GO" id="GO:0072593">
    <property type="term" value="P:reactive oxygen species metabolic process"/>
    <property type="evidence" value="ECO:0000304"/>
    <property type="project" value="UniProtKB"/>
</dbReference>
<dbReference type="GO" id="GO:0006898">
    <property type="term" value="P:receptor-mediated endocytosis"/>
    <property type="evidence" value="ECO:0000304"/>
    <property type="project" value="UniProtKB"/>
</dbReference>
<dbReference type="GO" id="GO:0001817">
    <property type="term" value="P:regulation of cytokine production"/>
    <property type="evidence" value="ECO:0000303"/>
    <property type="project" value="UniProtKB"/>
</dbReference>
<dbReference type="GO" id="GO:0007585">
    <property type="term" value="P:respiratory gaseous exchange by respiratory system"/>
    <property type="evidence" value="ECO:0007669"/>
    <property type="project" value="UniProtKB-KW"/>
</dbReference>
<dbReference type="GO" id="GO:0043129">
    <property type="term" value="P:surfactant homeostasis"/>
    <property type="evidence" value="ECO:0000315"/>
    <property type="project" value="UniProtKB"/>
</dbReference>
<dbReference type="CDD" id="cd03591">
    <property type="entry name" value="CLECT_collectin_like"/>
    <property type="match status" value="1"/>
</dbReference>
<dbReference type="FunFam" id="1.20.5.360:FF:000001">
    <property type="entry name" value="Pulmonary surfactant-associated protein D"/>
    <property type="match status" value="1"/>
</dbReference>
<dbReference type="FunFam" id="3.10.100.10:FF:000045">
    <property type="entry name" value="Pulmonary surfactant-associated protein D"/>
    <property type="match status" value="1"/>
</dbReference>
<dbReference type="Gene3D" id="3.10.100.10">
    <property type="entry name" value="Mannose-Binding Protein A, subunit A"/>
    <property type="match status" value="1"/>
</dbReference>
<dbReference type="Gene3D" id="1.20.5.360">
    <property type="entry name" value="SFTPD helical domain"/>
    <property type="match status" value="1"/>
</dbReference>
<dbReference type="InterPro" id="IPR001304">
    <property type="entry name" value="C-type_lectin-like"/>
</dbReference>
<dbReference type="InterPro" id="IPR016186">
    <property type="entry name" value="C-type_lectin-like/link_sf"/>
</dbReference>
<dbReference type="InterPro" id="IPR018378">
    <property type="entry name" value="C-type_lectin_CS"/>
</dbReference>
<dbReference type="InterPro" id="IPR051077">
    <property type="entry name" value="Ca-dependent_lectin"/>
</dbReference>
<dbReference type="InterPro" id="IPR008160">
    <property type="entry name" value="Collagen"/>
</dbReference>
<dbReference type="InterPro" id="IPR033990">
    <property type="entry name" value="Collectin_CTLD"/>
</dbReference>
<dbReference type="InterPro" id="IPR016187">
    <property type="entry name" value="CTDL_fold"/>
</dbReference>
<dbReference type="InterPro" id="IPR015097">
    <property type="entry name" value="Surfac_D-trimer"/>
</dbReference>
<dbReference type="PANTHER" id="PTHR24024">
    <property type="entry name" value="PULMONARY SURFACTANT-ASSOCIATED PROTEIN A"/>
    <property type="match status" value="1"/>
</dbReference>
<dbReference type="PANTHER" id="PTHR24024:SF15">
    <property type="entry name" value="PULMONARY SURFACTANT-ASSOCIATED PROTEIN D"/>
    <property type="match status" value="1"/>
</dbReference>
<dbReference type="Pfam" id="PF01391">
    <property type="entry name" value="Collagen"/>
    <property type="match status" value="2"/>
</dbReference>
<dbReference type="Pfam" id="PF00059">
    <property type="entry name" value="Lectin_C"/>
    <property type="match status" value="1"/>
</dbReference>
<dbReference type="Pfam" id="PF09006">
    <property type="entry name" value="Surfac_D-trimer"/>
    <property type="match status" value="1"/>
</dbReference>
<dbReference type="SMART" id="SM00034">
    <property type="entry name" value="CLECT"/>
    <property type="match status" value="1"/>
</dbReference>
<dbReference type="SUPFAM" id="SSF56436">
    <property type="entry name" value="C-type lectin-like"/>
    <property type="match status" value="1"/>
</dbReference>
<dbReference type="SUPFAM" id="SSF57944">
    <property type="entry name" value="Triple coiled coil domain of C-type lectins"/>
    <property type="match status" value="1"/>
</dbReference>
<dbReference type="PROSITE" id="PS00615">
    <property type="entry name" value="C_TYPE_LECTIN_1"/>
    <property type="match status" value="1"/>
</dbReference>
<dbReference type="PROSITE" id="PS50041">
    <property type="entry name" value="C_TYPE_LECTIN_2"/>
    <property type="match status" value="1"/>
</dbReference>
<comment type="function">
    <text evidence="8">Contributes to the lung's defense against inhaled microorganisms, organic antigens and toxins. Interacts with compounds such as bacterial lipopolysaccharides, oligosaccharides and fatty acids and modulates leukocyte action in immune response. May participate in the extracellular reorganization or turnover of pulmonary surfactant. Binds strongly maltose residues and to a lesser extent other alpha-glucosyl moieties.</text>
</comment>
<comment type="subunit">
    <text>Oligomeric complex of 4 set of homotrimers.</text>
</comment>
<comment type="interaction">
    <interactant intactId="EBI-11316157">
        <id>P35247</id>
    </interactant>
    <interactant intactId="EBI-7730807">
        <id>Q9BYF1</id>
        <label>ACE2</label>
    </interactant>
    <organismsDiffer>false</organismsDiffer>
    <experiments>2</experiments>
</comment>
<comment type="interaction">
    <interactant intactId="EBI-11316157">
        <id>P35247</id>
    </interactant>
    <interactant intactId="EBI-14031976">
        <id>O00322</id>
        <label>UPK1A</label>
    </interactant>
    <organismsDiffer>false</organismsDiffer>
    <experiments>3</experiments>
</comment>
<comment type="interaction">
    <interactant intactId="EBI-11316157">
        <id>P35247</id>
    </interactant>
    <interactant intactId="EBI-25474821">
        <id>P0DTC2</id>
        <label>S</label>
    </interactant>
    <organismsDiffer>true</organismsDiffer>
    <experiments>3</experiments>
</comment>
<comment type="interaction">
    <interactant intactId="EBI-27021977">
        <id>PRO_0000017465</id>
    </interactant>
    <interactant intactId="EBI-25474821">
        <id>P0DTC2</id>
        <label>S</label>
    </interactant>
    <organismsDiffer>true</organismsDiffer>
    <experiments>11</experiments>
</comment>
<comment type="subcellular location">
    <subcellularLocation>
        <location>Secreted</location>
        <location>Extracellular space</location>
        <location>Extracellular matrix</location>
    </subcellularLocation>
    <subcellularLocation>
        <location>Secreted</location>
        <location>Extracellular space</location>
        <location>Surface film</location>
    </subcellularLocation>
</comment>
<comment type="tissue specificity">
    <text evidence="8">Expressed in lung, brain, pancreas and adipose tissue (mainly mature adipocytes).</text>
</comment>
<comment type="PTM">
    <text>The N-terminus is blocked.</text>
</comment>
<comment type="PTM">
    <text evidence="1">Hydroxylation on proline residues within the sequence motif, GXPG, is most likely to be 4-hydroxy as this fits the requirement for 4-hydroxylation in vertebrates.</text>
</comment>
<comment type="PTM">
    <text evidence="1">S-nitrosylation at Cys-35 and Cys-40 alters the quaternary structure which results in a pro-inflammatory chemoattractive signaling activity with macrophages.</text>
</comment>
<comment type="miscellaneous">
    <text>Pulmonary surfactant consists of 90% lipid and 10% protein. There are 4 surfactant-associated proteins: 2 collagenous, carbohydrate-binding glycoproteins (SP-A and SP-D) and 2 small hydrophobic proteins (SP-B and SP-C).</text>
</comment>
<comment type="similarity">
    <text evidence="11">Belongs to the SFTPD family.</text>
</comment>
<comment type="online information" name="Functional Glycomics Gateway - Glycan Binding">
    <link uri="http://www.functionalglycomics.org/glycomics/GBPServlet?&amp;operationType=view&amp;cbpId=cbp_hum_Ctlect_228"/>
    <text>Pulmonary surfactant protein SP-D</text>
</comment>
<keyword id="KW-0002">3D-structure</keyword>
<keyword id="KW-0106">Calcium</keyword>
<keyword id="KW-0175">Coiled coil</keyword>
<keyword id="KW-0176">Collagen</keyword>
<keyword id="KW-0903">Direct protein sequencing</keyword>
<keyword id="KW-1015">Disulfide bond</keyword>
<keyword id="KW-0272">Extracellular matrix</keyword>
<keyword id="KW-0305">Gaseous exchange</keyword>
<keyword id="KW-0325">Glycoprotein</keyword>
<keyword id="KW-0379">Hydroxylation</keyword>
<keyword id="KW-0391">Immunity</keyword>
<keyword id="KW-0399">Innate immunity</keyword>
<keyword id="KW-0430">Lectin</keyword>
<keyword id="KW-1267">Proteomics identification</keyword>
<keyword id="KW-1185">Reference proteome</keyword>
<keyword id="KW-0677">Repeat</keyword>
<keyword id="KW-0702">S-nitrosylation</keyword>
<keyword id="KW-0964">Secreted</keyword>
<keyword id="KW-0732">Signal</keyword>
<keyword id="KW-0767">Surface film</keyword>
<sequence length="375" mass="37728">MLLFLLSALVLLTQPLGYLEAEMKTYSHRTMPSACTLVMCSSVESGLPGRDGRDGREGPRGEKGDPGLPGAAGQAGMPGQAGPVGPKGDNGSVGEPGPKGDTGPSGPPGPPGVPGPAGREGPLGKQGNIGPQGKPGPKGEAGPKGEVGAPGMQGSAGARGLAGPKGERGVPGERGVPGNTGAAGSAGAMGPQGSPGARGPPGLKGDKGIPGDKGAKGESGLPDVASLRQQVEALQGQVQHLQAAFSQYKKVELFPNGQSVGEKIFKTAGFVKPFTEAQLLCTQAGGQLASPRSAAENAALQQLVVAKNEAAFLSMTDSKTEGKFTYPTGESLVYSNWAPGEPNDDGGSEDCVEIFTNGKWNDRACGEKRLVVCEF</sequence>
<gene>
    <name type="primary">SFTPD</name>
    <name type="synonym">COLEC7</name>
    <name type="synonym">PSPD</name>
    <name type="synonym">SFTP4</name>
</gene>
<proteinExistence type="evidence at protein level"/>
<accession>P35247</accession>
<accession>Q5T0M3</accession>
<accession>Q6FH08</accession>
<accession>Q86YK9</accession>
<accession>Q8TCD8</accession>
<accession>Q9UCJ2</accession>
<accession>Q9UCJ3</accession>
<evidence type="ECO:0000250" key="1"/>
<evidence type="ECO:0000250" key="2">
    <source>
        <dbReference type="UniProtKB" id="P35248"/>
    </source>
</evidence>
<evidence type="ECO:0000255" key="3"/>
<evidence type="ECO:0000255" key="4">
    <source>
        <dbReference type="PROSITE-ProRule" id="PRU00040"/>
    </source>
</evidence>
<evidence type="ECO:0000256" key="5">
    <source>
        <dbReference type="SAM" id="MobiDB-lite"/>
    </source>
</evidence>
<evidence type="ECO:0000269" key="6">
    <source>
    </source>
</evidence>
<evidence type="ECO:0000269" key="7">
    <source>
    </source>
</evidence>
<evidence type="ECO:0000269" key="8">
    <source>
    </source>
</evidence>
<evidence type="ECO:0000269" key="9">
    <source ref="3"/>
</evidence>
<evidence type="ECO:0000269" key="10">
    <source ref="4"/>
</evidence>
<evidence type="ECO:0000305" key="11"/>
<evidence type="ECO:0007829" key="12">
    <source>
        <dbReference type="PDB" id="1PWB"/>
    </source>
</evidence>
<evidence type="ECO:0007829" key="13">
    <source>
        <dbReference type="PDB" id="2GGX"/>
    </source>
</evidence>
<evidence type="ECO:0007829" key="14">
    <source>
        <dbReference type="PDB" id="2RIA"/>
    </source>
</evidence>
<organism>
    <name type="scientific">Homo sapiens</name>
    <name type="common">Human</name>
    <dbReference type="NCBI Taxonomy" id="9606"/>
    <lineage>
        <taxon>Eukaryota</taxon>
        <taxon>Metazoa</taxon>
        <taxon>Chordata</taxon>
        <taxon>Craniata</taxon>
        <taxon>Vertebrata</taxon>
        <taxon>Euteleostomi</taxon>
        <taxon>Mammalia</taxon>
        <taxon>Eutheria</taxon>
        <taxon>Euarchontoglires</taxon>
        <taxon>Primates</taxon>
        <taxon>Haplorrhini</taxon>
        <taxon>Catarrhini</taxon>
        <taxon>Hominidae</taxon>
        <taxon>Homo</taxon>
    </lineage>
</organism>
<name>SFTPD_HUMAN</name>
<protein>
    <recommendedName>
        <fullName>Pulmonary surfactant-associated protein D</fullName>
        <shortName>PSP-D</shortName>
        <shortName>SP-D</shortName>
    </recommendedName>
    <alternativeName>
        <fullName>Collectin-7</fullName>
    </alternativeName>
    <alternativeName>
        <fullName>Lung surfactant protein D</fullName>
    </alternativeName>
</protein>
<reference key="1">
    <citation type="journal article" date="1992" name="Biochem. J.">
        <title>Purification, characterization and cDNA cloning of human lung surfactant protein D.</title>
        <authorList>
            <person name="Lu J."/>
            <person name="Willis A.C."/>
            <person name="Reid K.B.M."/>
        </authorList>
    </citation>
    <scope>NUCLEOTIDE SEQUENCE [MRNA]</scope>
    <scope>PROTEIN SEQUENCE OF 214-243</scope>
    <scope>VARIANTS THR-31 AND ALA-180</scope>
    <source>
        <tissue>Amniotic fluid</tissue>
        <tissue>Lung</tissue>
    </source>
</reference>
<reference key="2">
    <citation type="journal article" date="1993" name="J. Biol. Chem.">
        <title>Genomic organization of human surfactant protein D (SP-D). SP-D is encoded on chromosome 10q22.2-23.1.</title>
        <authorList>
            <person name="Crouch E."/>
            <person name="Rust K."/>
            <person name="Veile R."/>
            <person name="Donis-Keller H."/>
            <person name="Grosso L."/>
        </authorList>
    </citation>
    <scope>NUCLEOTIDE SEQUENCE [GENOMIC DNA]</scope>
    <source>
        <tissue>Placenta</tissue>
    </source>
</reference>
<reference key="3">
    <citation type="submission" date="2004-06" db="EMBL/GenBank/DDBJ databases">
        <title>Cloning of human full open reading frames in Gateway(TM) system entry vector (pDONR201).</title>
        <authorList>
            <person name="Halleck A."/>
            <person name="Ebert L."/>
            <person name="Mkoundinya M."/>
            <person name="Schick M."/>
            <person name="Eisenstein S."/>
            <person name="Neubert P."/>
            <person name="Kstrang K."/>
            <person name="Schatten R."/>
            <person name="Shen B."/>
            <person name="Henze S."/>
            <person name="Mar W."/>
            <person name="Korn B."/>
            <person name="Zuo D."/>
            <person name="Hu Y."/>
            <person name="LaBaer J."/>
        </authorList>
    </citation>
    <scope>NUCLEOTIDE SEQUENCE [LARGE SCALE MRNA]</scope>
    <scope>VARIANTS THR-31 AND ALA-180</scope>
</reference>
<reference key="4">
    <citation type="submission" date="2003-01" db="EMBL/GenBank/DDBJ databases">
        <authorList>
            <consortium name="SeattleSNPs variation discovery resource"/>
        </authorList>
    </citation>
    <scope>NUCLEOTIDE SEQUENCE [GENOMIC DNA]</scope>
    <scope>VARIANTS THR-31; VAL-123; ALA-180; THR-290 AND LYS-309</scope>
</reference>
<reference key="5">
    <citation type="journal article" date="2004" name="Nature">
        <title>The DNA sequence and comparative analysis of human chromosome 10.</title>
        <authorList>
            <person name="Deloukas P."/>
            <person name="Earthrowl M.E."/>
            <person name="Grafham D.V."/>
            <person name="Rubenfield M."/>
            <person name="French L."/>
            <person name="Steward C.A."/>
            <person name="Sims S.K."/>
            <person name="Jones M.C."/>
            <person name="Searle S."/>
            <person name="Scott C."/>
            <person name="Howe K."/>
            <person name="Hunt S.E."/>
            <person name="Andrews T.D."/>
            <person name="Gilbert J.G.R."/>
            <person name="Swarbreck D."/>
            <person name="Ashurst J.L."/>
            <person name="Taylor A."/>
            <person name="Battles J."/>
            <person name="Bird C.P."/>
            <person name="Ainscough R."/>
            <person name="Almeida J.P."/>
            <person name="Ashwell R.I.S."/>
            <person name="Ambrose K.D."/>
            <person name="Babbage A.K."/>
            <person name="Bagguley C.L."/>
            <person name="Bailey J."/>
            <person name="Banerjee R."/>
            <person name="Bates K."/>
            <person name="Beasley H."/>
            <person name="Bray-Allen S."/>
            <person name="Brown A.J."/>
            <person name="Brown J.Y."/>
            <person name="Burford D.C."/>
            <person name="Burrill W."/>
            <person name="Burton J."/>
            <person name="Cahill P."/>
            <person name="Camire D."/>
            <person name="Carter N.P."/>
            <person name="Chapman J.C."/>
            <person name="Clark S.Y."/>
            <person name="Clarke G."/>
            <person name="Clee C.M."/>
            <person name="Clegg S."/>
            <person name="Corby N."/>
            <person name="Coulson A."/>
            <person name="Dhami P."/>
            <person name="Dutta I."/>
            <person name="Dunn M."/>
            <person name="Faulkner L."/>
            <person name="Frankish A."/>
            <person name="Frankland J.A."/>
            <person name="Garner P."/>
            <person name="Garnett J."/>
            <person name="Gribble S."/>
            <person name="Griffiths C."/>
            <person name="Grocock R."/>
            <person name="Gustafson E."/>
            <person name="Hammond S."/>
            <person name="Harley J.L."/>
            <person name="Hart E."/>
            <person name="Heath P.D."/>
            <person name="Ho T.P."/>
            <person name="Hopkins B."/>
            <person name="Horne J."/>
            <person name="Howden P.J."/>
            <person name="Huckle E."/>
            <person name="Hynds C."/>
            <person name="Johnson C."/>
            <person name="Johnson D."/>
            <person name="Kana A."/>
            <person name="Kay M."/>
            <person name="Kimberley A.M."/>
            <person name="Kershaw J.K."/>
            <person name="Kokkinaki M."/>
            <person name="Laird G.K."/>
            <person name="Lawlor S."/>
            <person name="Lee H.M."/>
            <person name="Leongamornlert D.A."/>
            <person name="Laird G."/>
            <person name="Lloyd C."/>
            <person name="Lloyd D.M."/>
            <person name="Loveland J."/>
            <person name="Lovell J."/>
            <person name="McLaren S."/>
            <person name="McLay K.E."/>
            <person name="McMurray A."/>
            <person name="Mashreghi-Mohammadi M."/>
            <person name="Matthews L."/>
            <person name="Milne S."/>
            <person name="Nickerson T."/>
            <person name="Nguyen M."/>
            <person name="Overton-Larty E."/>
            <person name="Palmer S.A."/>
            <person name="Pearce A.V."/>
            <person name="Peck A.I."/>
            <person name="Pelan S."/>
            <person name="Phillimore B."/>
            <person name="Porter K."/>
            <person name="Rice C.M."/>
            <person name="Rogosin A."/>
            <person name="Ross M.T."/>
            <person name="Sarafidou T."/>
            <person name="Sehra H.K."/>
            <person name="Shownkeen R."/>
            <person name="Skuce C.D."/>
            <person name="Smith M."/>
            <person name="Standring L."/>
            <person name="Sycamore N."/>
            <person name="Tester J."/>
            <person name="Thorpe A."/>
            <person name="Torcasso W."/>
            <person name="Tracey A."/>
            <person name="Tromans A."/>
            <person name="Tsolas J."/>
            <person name="Wall M."/>
            <person name="Walsh J."/>
            <person name="Wang H."/>
            <person name="Weinstock K."/>
            <person name="West A.P."/>
            <person name="Willey D.L."/>
            <person name="Whitehead S.L."/>
            <person name="Wilming L."/>
            <person name="Wray P.W."/>
            <person name="Young L."/>
            <person name="Chen Y."/>
            <person name="Lovering R.C."/>
            <person name="Moschonas N.K."/>
            <person name="Siebert R."/>
            <person name="Fechtel K."/>
            <person name="Bentley D."/>
            <person name="Durbin R.M."/>
            <person name="Hubbard T."/>
            <person name="Doucette-Stamm L."/>
            <person name="Beck S."/>
            <person name="Smith D.R."/>
            <person name="Rogers J."/>
        </authorList>
    </citation>
    <scope>NUCLEOTIDE SEQUENCE [LARGE SCALE GENOMIC DNA]</scope>
</reference>
<reference key="6">
    <citation type="journal article" date="2004" name="Genome Res.">
        <title>The status, quality, and expansion of the NIH full-length cDNA project: the Mammalian Gene Collection (MGC).</title>
        <authorList>
            <consortium name="The MGC Project Team"/>
        </authorList>
    </citation>
    <scope>NUCLEOTIDE SEQUENCE [LARGE SCALE MRNA]</scope>
    <source>
        <tissue>Lung</tissue>
    </source>
</reference>
<reference key="7">
    <citation type="journal article" date="1993" name="Am. J. Pathol.">
        <title>Accumulation of surfactant protein D in human pulmonary alveolar proteinosis.</title>
        <authorList>
            <person name="Crouch E."/>
            <person name="Persson A."/>
            <person name="Chang D."/>
        </authorList>
    </citation>
    <scope>PROTEIN SEQUENCE OF 46-72 AND 223-260</scope>
</reference>
<reference key="8">
    <citation type="journal article" date="1991" name="Arch. Biochem. Biophys.">
        <title>Human surfactant protein D: SP-D contains a C-type lectin carbohydrate recognition domain.</title>
        <authorList>
            <person name="Rust K."/>
            <person name="Grosso L."/>
            <person name="Zhang V."/>
            <person name="Chang D."/>
            <person name="Persson A."/>
            <person name="Longmore W."/>
            <person name="Cai G.-Z."/>
            <person name="Crouch E."/>
        </authorList>
    </citation>
    <scope>NUCLEOTIDE SEQUENCE [GENOMIC DNA] OF 60-375</scope>
    <scope>PARTIAL PROTEIN SEQUENCE</scope>
    <source>
        <tissue>Lung</tissue>
    </source>
</reference>
<reference key="9">
    <citation type="journal article" date="2013" name="Int. J. Obes. Relat. Metab. Disord.">
        <title>The lung innate immune gene surfactant protein-D is expressed in adipose tissue and linked to obesity status.</title>
        <authorList>
            <person name="Ortega F.J."/>
            <person name="Pueyo N."/>
            <person name="Moreno-Navarrete J.M."/>
            <person name="Sabater M."/>
            <person name="Rodriguez-Hermosa J.I."/>
            <person name="Ricart W."/>
            <person name="Tinahones F.J."/>
            <person name="Fernandez-Real J.M."/>
        </authorList>
    </citation>
    <scope>FUNCTION</scope>
    <scope>TISSUE SPECIFICITY</scope>
</reference>
<reference key="10">
    <citation type="journal article" date="1999" name="Structure">
        <title>Crystal structure of the trimeric alpha-helical coiled-coil and the three lectin domains of human lung surfactant protein D.</title>
        <authorList>
            <person name="Hakansson K."/>
            <person name="Lim N.K."/>
            <person name="Hoppe H.-J."/>
            <person name="Reid K.B.M."/>
        </authorList>
    </citation>
    <scope>X-RAY CRYSTALLOGRAPHY (2.3 ANGSTROMS)</scope>
</reference>
<reference key="11">
    <citation type="journal article" date="2009" name="Am. J. Hum. Genet.">
        <title>Genetic defects in surfactant protein A2 are associated with pulmonary fibrosis and lung cancer.</title>
        <authorList>
            <person name="Wang Y."/>
            <person name="Kuan P.J."/>
            <person name="Xing C."/>
            <person name="Cronkhite J.T."/>
            <person name="Torres F."/>
            <person name="Rosenblatt R.L."/>
            <person name="DiMaio J.M."/>
            <person name="Kinch L.N."/>
            <person name="Grishin N.V."/>
            <person name="Garcia C.K."/>
        </authorList>
    </citation>
    <scope>VARIANTS THR-31; VAL-123; ALA-180 AND THR-290</scope>
</reference>